<proteinExistence type="inferred from homology"/>
<evidence type="ECO:0000255" key="1">
    <source>
        <dbReference type="HAMAP-Rule" id="MF_00023"/>
    </source>
</evidence>
<comment type="function">
    <text evidence="1">Required for rescue of stalled ribosomes mediated by trans-translation. Binds to transfer-messenger RNA (tmRNA), required for stable association of tmRNA with ribosomes. tmRNA and SmpB together mimic tRNA shape, replacing the anticodon stem-loop with SmpB. tmRNA is encoded by the ssrA gene; the 2 termini fold to resemble tRNA(Ala) and it encodes a 'tag peptide', a short internal open reading frame. During trans-translation Ala-aminoacylated tmRNA acts like a tRNA, entering the A-site of stalled ribosomes, displacing the stalled mRNA. The ribosome then switches to translate the ORF on the tmRNA; the nascent peptide is terminated with the 'tag peptide' encoded by the tmRNA and targeted for degradation. The ribosome is freed to recommence translation, which seems to be the essential function of trans-translation.</text>
</comment>
<comment type="subcellular location">
    <subcellularLocation>
        <location evidence="1">Cytoplasm</location>
    </subcellularLocation>
    <text evidence="1">The tmRNA-SmpB complex associates with stalled 70S ribosomes.</text>
</comment>
<comment type="similarity">
    <text evidence="1">Belongs to the SmpB family.</text>
</comment>
<dbReference type="EMBL" id="CP000890">
    <property type="protein sequence ID" value="ABX78298.1"/>
    <property type="molecule type" value="Genomic_DNA"/>
</dbReference>
<dbReference type="RefSeq" id="WP_012220596.1">
    <property type="nucleotide sequence ID" value="NC_010117.1"/>
</dbReference>
<dbReference type="SMR" id="A9N8I5"/>
<dbReference type="KEGG" id="cbs:COXBURSA331_A1455"/>
<dbReference type="HOGENOM" id="CLU_108953_3_0_6"/>
<dbReference type="GO" id="GO:0005829">
    <property type="term" value="C:cytosol"/>
    <property type="evidence" value="ECO:0007669"/>
    <property type="project" value="TreeGrafter"/>
</dbReference>
<dbReference type="GO" id="GO:0003723">
    <property type="term" value="F:RNA binding"/>
    <property type="evidence" value="ECO:0007669"/>
    <property type="project" value="UniProtKB-UniRule"/>
</dbReference>
<dbReference type="GO" id="GO:0070929">
    <property type="term" value="P:trans-translation"/>
    <property type="evidence" value="ECO:0007669"/>
    <property type="project" value="UniProtKB-UniRule"/>
</dbReference>
<dbReference type="CDD" id="cd09294">
    <property type="entry name" value="SmpB"/>
    <property type="match status" value="1"/>
</dbReference>
<dbReference type="Gene3D" id="2.40.280.10">
    <property type="match status" value="1"/>
</dbReference>
<dbReference type="HAMAP" id="MF_00023">
    <property type="entry name" value="SmpB"/>
    <property type="match status" value="1"/>
</dbReference>
<dbReference type="InterPro" id="IPR023620">
    <property type="entry name" value="SmpB"/>
</dbReference>
<dbReference type="InterPro" id="IPR000037">
    <property type="entry name" value="SsrA-bd_prot"/>
</dbReference>
<dbReference type="InterPro" id="IPR020081">
    <property type="entry name" value="SsrA-bd_prot_CS"/>
</dbReference>
<dbReference type="NCBIfam" id="NF003843">
    <property type="entry name" value="PRK05422.1"/>
    <property type="match status" value="1"/>
</dbReference>
<dbReference type="NCBIfam" id="TIGR00086">
    <property type="entry name" value="smpB"/>
    <property type="match status" value="1"/>
</dbReference>
<dbReference type="PANTHER" id="PTHR30308:SF2">
    <property type="entry name" value="SSRA-BINDING PROTEIN"/>
    <property type="match status" value="1"/>
</dbReference>
<dbReference type="PANTHER" id="PTHR30308">
    <property type="entry name" value="TMRNA-BINDING COMPONENT OF TRANS-TRANSLATION TAGGING COMPLEX"/>
    <property type="match status" value="1"/>
</dbReference>
<dbReference type="Pfam" id="PF01668">
    <property type="entry name" value="SmpB"/>
    <property type="match status" value="1"/>
</dbReference>
<dbReference type="SUPFAM" id="SSF74982">
    <property type="entry name" value="Small protein B (SmpB)"/>
    <property type="match status" value="1"/>
</dbReference>
<dbReference type="PROSITE" id="PS01317">
    <property type="entry name" value="SSRP"/>
    <property type="match status" value="1"/>
</dbReference>
<sequence length="159" mass="18369">MNKQISKKPAQRTIALNKKALHDYYVEQRFEAGLVLEGWEVKSIRAGRVQLRDSYVVFKGGEAWLIGAHLSPLPNVAEYMKADPQRSRKLLLNKPEIGKLFGAVQKQGLTVVPLDLHWHKNHVKVEIALAKGKKTHDKRETIKRREWEREKHRVLKSHG</sequence>
<gene>
    <name evidence="1" type="primary">smpB</name>
    <name type="ordered locus">COXBURSA331_A1455</name>
</gene>
<reference key="1">
    <citation type="submission" date="2007-11" db="EMBL/GenBank/DDBJ databases">
        <title>Genome sequencing of phylogenetically and phenotypically diverse Coxiella burnetii isolates.</title>
        <authorList>
            <person name="Seshadri R."/>
            <person name="Samuel J.E."/>
        </authorList>
    </citation>
    <scope>NUCLEOTIDE SEQUENCE [LARGE SCALE GENOMIC DNA]</scope>
    <source>
        <strain>RSA 331 / Henzerling II</strain>
    </source>
</reference>
<accession>A9N8I5</accession>
<protein>
    <recommendedName>
        <fullName evidence="1">SsrA-binding protein</fullName>
    </recommendedName>
    <alternativeName>
        <fullName evidence="1">Small protein B</fullName>
    </alternativeName>
</protein>
<keyword id="KW-0963">Cytoplasm</keyword>
<keyword id="KW-0694">RNA-binding</keyword>
<name>SSRP_COXBR</name>
<organism>
    <name type="scientific">Coxiella burnetii (strain RSA 331 / Henzerling II)</name>
    <dbReference type="NCBI Taxonomy" id="360115"/>
    <lineage>
        <taxon>Bacteria</taxon>
        <taxon>Pseudomonadati</taxon>
        <taxon>Pseudomonadota</taxon>
        <taxon>Gammaproteobacteria</taxon>
        <taxon>Legionellales</taxon>
        <taxon>Coxiellaceae</taxon>
        <taxon>Coxiella</taxon>
    </lineage>
</organism>
<feature type="chain" id="PRO_1000074349" description="SsrA-binding protein">
    <location>
        <begin position="1"/>
        <end position="159"/>
    </location>
</feature>